<accession>A3MUK8</accession>
<organism>
    <name type="scientific">Pyrobaculum calidifontis (strain DSM 21063 / JCM 11548 / VA1)</name>
    <dbReference type="NCBI Taxonomy" id="410359"/>
    <lineage>
        <taxon>Archaea</taxon>
        <taxon>Thermoproteota</taxon>
        <taxon>Thermoprotei</taxon>
        <taxon>Thermoproteales</taxon>
        <taxon>Thermoproteaceae</taxon>
        <taxon>Pyrobaculum</taxon>
    </lineage>
</organism>
<name>ILVD_PYRCJ</name>
<dbReference type="EC" id="4.2.1.9" evidence="1"/>
<dbReference type="EMBL" id="CP000561">
    <property type="protein sequence ID" value="ABO08325.1"/>
    <property type="molecule type" value="Genomic_DNA"/>
</dbReference>
<dbReference type="RefSeq" id="WP_011849583.1">
    <property type="nucleotide sequence ID" value="NC_009073.1"/>
</dbReference>
<dbReference type="SMR" id="A3MUK8"/>
<dbReference type="STRING" id="410359.Pcal_0900"/>
<dbReference type="GeneID" id="4910244"/>
<dbReference type="KEGG" id="pcl:Pcal_0900"/>
<dbReference type="eggNOG" id="arCOG04045">
    <property type="taxonomic scope" value="Archaea"/>
</dbReference>
<dbReference type="HOGENOM" id="CLU_014271_4_2_2"/>
<dbReference type="OrthoDB" id="8674at2157"/>
<dbReference type="UniPathway" id="UPA00047">
    <property type="reaction ID" value="UER00057"/>
</dbReference>
<dbReference type="UniPathway" id="UPA00049">
    <property type="reaction ID" value="UER00061"/>
</dbReference>
<dbReference type="Proteomes" id="UP000001431">
    <property type="component" value="Chromosome"/>
</dbReference>
<dbReference type="GO" id="GO:0051537">
    <property type="term" value="F:2 iron, 2 sulfur cluster binding"/>
    <property type="evidence" value="ECO:0007669"/>
    <property type="project" value="UniProtKB-UniRule"/>
</dbReference>
<dbReference type="GO" id="GO:0004160">
    <property type="term" value="F:dihydroxy-acid dehydratase activity"/>
    <property type="evidence" value="ECO:0007669"/>
    <property type="project" value="UniProtKB-UniRule"/>
</dbReference>
<dbReference type="GO" id="GO:0000287">
    <property type="term" value="F:magnesium ion binding"/>
    <property type="evidence" value="ECO:0007669"/>
    <property type="project" value="UniProtKB-UniRule"/>
</dbReference>
<dbReference type="GO" id="GO:0009097">
    <property type="term" value="P:isoleucine biosynthetic process"/>
    <property type="evidence" value="ECO:0007669"/>
    <property type="project" value="UniProtKB-UniRule"/>
</dbReference>
<dbReference type="GO" id="GO:0009099">
    <property type="term" value="P:L-valine biosynthetic process"/>
    <property type="evidence" value="ECO:0007669"/>
    <property type="project" value="UniProtKB-UniRule"/>
</dbReference>
<dbReference type="FunFam" id="3.50.30.80:FF:000001">
    <property type="entry name" value="Dihydroxy-acid dehydratase"/>
    <property type="match status" value="1"/>
</dbReference>
<dbReference type="Gene3D" id="3.50.30.80">
    <property type="entry name" value="IlvD/EDD C-terminal domain-like"/>
    <property type="match status" value="1"/>
</dbReference>
<dbReference type="HAMAP" id="MF_00012">
    <property type="entry name" value="IlvD"/>
    <property type="match status" value="1"/>
</dbReference>
<dbReference type="InterPro" id="IPR050165">
    <property type="entry name" value="DHAD_IlvD/Edd"/>
</dbReference>
<dbReference type="InterPro" id="IPR042096">
    <property type="entry name" value="Dihydro-acid_dehy_C"/>
</dbReference>
<dbReference type="InterPro" id="IPR004404">
    <property type="entry name" value="DihydroxyA_deHydtase"/>
</dbReference>
<dbReference type="InterPro" id="IPR020558">
    <property type="entry name" value="DiOHA_6PGluconate_deHydtase_CS"/>
</dbReference>
<dbReference type="InterPro" id="IPR056740">
    <property type="entry name" value="ILV_EDD_C"/>
</dbReference>
<dbReference type="InterPro" id="IPR000581">
    <property type="entry name" value="ILV_EDD_N"/>
</dbReference>
<dbReference type="InterPro" id="IPR037237">
    <property type="entry name" value="IlvD/EDD_N"/>
</dbReference>
<dbReference type="NCBIfam" id="TIGR00110">
    <property type="entry name" value="ilvD"/>
    <property type="match status" value="1"/>
</dbReference>
<dbReference type="NCBIfam" id="NF002068">
    <property type="entry name" value="PRK00911.1"/>
    <property type="match status" value="1"/>
</dbReference>
<dbReference type="PANTHER" id="PTHR21000">
    <property type="entry name" value="DIHYDROXY-ACID DEHYDRATASE DAD"/>
    <property type="match status" value="1"/>
</dbReference>
<dbReference type="PANTHER" id="PTHR21000:SF5">
    <property type="entry name" value="DIHYDROXY-ACID DEHYDRATASE, MITOCHONDRIAL"/>
    <property type="match status" value="1"/>
</dbReference>
<dbReference type="Pfam" id="PF24877">
    <property type="entry name" value="ILV_EDD_C"/>
    <property type="match status" value="1"/>
</dbReference>
<dbReference type="Pfam" id="PF00920">
    <property type="entry name" value="ILVD_EDD_N"/>
    <property type="match status" value="1"/>
</dbReference>
<dbReference type="SUPFAM" id="SSF143975">
    <property type="entry name" value="IlvD/EDD N-terminal domain-like"/>
    <property type="match status" value="1"/>
</dbReference>
<dbReference type="SUPFAM" id="SSF52016">
    <property type="entry name" value="LeuD/IlvD-like"/>
    <property type="match status" value="1"/>
</dbReference>
<dbReference type="PROSITE" id="PS00886">
    <property type="entry name" value="ILVD_EDD_1"/>
    <property type="match status" value="1"/>
</dbReference>
<dbReference type="PROSITE" id="PS00887">
    <property type="entry name" value="ILVD_EDD_2"/>
    <property type="match status" value="1"/>
</dbReference>
<comment type="function">
    <text evidence="1">Functions in the biosynthesis of branched-chain amino acids. Catalyzes the dehydration of (2R,3R)-2,3-dihydroxy-3-methylpentanoate (2,3-dihydroxy-3-methylvalerate) into 2-oxo-3-methylpentanoate (2-oxo-3-methylvalerate) and of (2R)-2,3-dihydroxy-3-methylbutanoate (2,3-dihydroxyisovalerate) into 2-oxo-3-methylbutanoate (2-oxoisovalerate), the penultimate precursor to L-isoleucine and L-valine, respectively.</text>
</comment>
<comment type="catalytic activity">
    <reaction evidence="1">
        <text>(2R)-2,3-dihydroxy-3-methylbutanoate = 3-methyl-2-oxobutanoate + H2O</text>
        <dbReference type="Rhea" id="RHEA:24809"/>
        <dbReference type="ChEBI" id="CHEBI:11851"/>
        <dbReference type="ChEBI" id="CHEBI:15377"/>
        <dbReference type="ChEBI" id="CHEBI:49072"/>
        <dbReference type="EC" id="4.2.1.9"/>
    </reaction>
    <physiologicalReaction direction="left-to-right" evidence="1">
        <dbReference type="Rhea" id="RHEA:24810"/>
    </physiologicalReaction>
</comment>
<comment type="catalytic activity">
    <reaction evidence="1">
        <text>(2R,3R)-2,3-dihydroxy-3-methylpentanoate = (S)-3-methyl-2-oxopentanoate + H2O</text>
        <dbReference type="Rhea" id="RHEA:27694"/>
        <dbReference type="ChEBI" id="CHEBI:15377"/>
        <dbReference type="ChEBI" id="CHEBI:35146"/>
        <dbReference type="ChEBI" id="CHEBI:49258"/>
        <dbReference type="EC" id="4.2.1.9"/>
    </reaction>
    <physiologicalReaction direction="left-to-right" evidence="1">
        <dbReference type="Rhea" id="RHEA:27695"/>
    </physiologicalReaction>
</comment>
<comment type="cofactor">
    <cofactor evidence="1">
        <name>[2Fe-2S] cluster</name>
        <dbReference type="ChEBI" id="CHEBI:190135"/>
    </cofactor>
    <text evidence="1">Binds 1 [2Fe-2S] cluster per subunit. This cluster acts as a Lewis acid cofactor.</text>
</comment>
<comment type="cofactor">
    <cofactor evidence="1">
        <name>Mg(2+)</name>
        <dbReference type="ChEBI" id="CHEBI:18420"/>
    </cofactor>
</comment>
<comment type="pathway">
    <text evidence="1">Amino-acid biosynthesis; L-isoleucine biosynthesis; L-isoleucine from 2-oxobutanoate: step 3/4.</text>
</comment>
<comment type="pathway">
    <text evidence="1">Amino-acid biosynthesis; L-valine biosynthesis; L-valine from pyruvate: step 3/4.</text>
</comment>
<comment type="subunit">
    <text evidence="1">Homodimer.</text>
</comment>
<comment type="similarity">
    <text evidence="1">Belongs to the IlvD/Edd family.</text>
</comment>
<feature type="chain" id="PRO_1000001041" description="Dihydroxy-acid dehydratase">
    <location>
        <begin position="1"/>
        <end position="564"/>
    </location>
</feature>
<feature type="active site" description="Proton acceptor" evidence="1">
    <location>
        <position position="474"/>
    </location>
</feature>
<feature type="binding site" evidence="1">
    <location>
        <position position="51"/>
    </location>
    <ligand>
        <name>[2Fe-2S] cluster</name>
        <dbReference type="ChEBI" id="CHEBI:190135"/>
    </ligand>
</feature>
<feature type="binding site" evidence="1">
    <location>
        <position position="83"/>
    </location>
    <ligand>
        <name>Mg(2+)</name>
        <dbReference type="ChEBI" id="CHEBI:18420"/>
    </ligand>
</feature>
<feature type="binding site" evidence="1">
    <location>
        <position position="124"/>
    </location>
    <ligand>
        <name>[2Fe-2S] cluster</name>
        <dbReference type="ChEBI" id="CHEBI:190135"/>
    </ligand>
</feature>
<feature type="binding site" evidence="1">
    <location>
        <position position="125"/>
    </location>
    <ligand>
        <name>Mg(2+)</name>
        <dbReference type="ChEBI" id="CHEBI:18420"/>
    </ligand>
</feature>
<feature type="binding site" description="via carbamate group" evidence="1">
    <location>
        <position position="126"/>
    </location>
    <ligand>
        <name>Mg(2+)</name>
        <dbReference type="ChEBI" id="CHEBI:18420"/>
    </ligand>
</feature>
<feature type="binding site" evidence="1">
    <location>
        <position position="196"/>
    </location>
    <ligand>
        <name>[2Fe-2S] cluster</name>
        <dbReference type="ChEBI" id="CHEBI:190135"/>
    </ligand>
</feature>
<feature type="binding site" evidence="1">
    <location>
        <position position="448"/>
    </location>
    <ligand>
        <name>Mg(2+)</name>
        <dbReference type="ChEBI" id="CHEBI:18420"/>
    </ligand>
</feature>
<feature type="modified residue" description="N6-carboxylysine" evidence="1">
    <location>
        <position position="126"/>
    </location>
</feature>
<protein>
    <recommendedName>
        <fullName evidence="1">Dihydroxy-acid dehydratase</fullName>
        <shortName evidence="1">DAD</shortName>
        <ecNumber evidence="1">4.2.1.9</ecNumber>
    </recommendedName>
</protein>
<proteinExistence type="inferred from homology"/>
<evidence type="ECO:0000255" key="1">
    <source>
        <dbReference type="HAMAP-Rule" id="MF_00012"/>
    </source>
</evidence>
<reference key="1">
    <citation type="submission" date="2007-02" db="EMBL/GenBank/DDBJ databases">
        <title>Complete sequence of Pyrobaculum calidifontis JCM 11548.</title>
        <authorList>
            <consortium name="US DOE Joint Genome Institute"/>
            <person name="Copeland A."/>
            <person name="Lucas S."/>
            <person name="Lapidus A."/>
            <person name="Barry K."/>
            <person name="Glavina del Rio T."/>
            <person name="Dalin E."/>
            <person name="Tice H."/>
            <person name="Pitluck S."/>
            <person name="Chain P."/>
            <person name="Malfatti S."/>
            <person name="Shin M."/>
            <person name="Vergez L."/>
            <person name="Schmutz J."/>
            <person name="Larimer F."/>
            <person name="Land M."/>
            <person name="Hauser L."/>
            <person name="Kyrpides N."/>
            <person name="Mikhailova N."/>
            <person name="Cozen A.E."/>
            <person name="Fitz-Gibbon S.T."/>
            <person name="House C.H."/>
            <person name="Saltikov C."/>
            <person name="Lowe T.M."/>
            <person name="Richardson P."/>
        </authorList>
    </citation>
    <scope>NUCLEOTIDE SEQUENCE [LARGE SCALE GENOMIC DNA]</scope>
    <source>
        <strain>DSM 21063 / JCM 11548 / VA1</strain>
    </source>
</reference>
<gene>
    <name evidence="1" type="primary">ilvD</name>
    <name type="ordered locus">Pcal_0900</name>
</gene>
<sequence length="564" mass="59924">MVRVRIRSPSWYDGVDNAPHRVYLRAVGFTEEDFSKPLVGVAVSWSELGPCNYHTLELARYVKEGVKEAGGAALAAPTIVVNDGINMGTPGMRYSLISRELIADSIEAQFNAHGVDAWVGIGGCDKTQPGIIMAMVRLNLPSVYLYGGSAEAGWLGERELTVEDVFEAVGAYYAGRITLEELKRVEELSFPTYGTCQGMFTANTMALLAEAMGVSLLGSATPPATSARRRKFAVESGKAAVRALELGIKPRDVVTYDALYNAAVALFATAGSTNAILHLLAIAHEAGVKFALEDFDKIGKRVPVIAALRPAGPYAMQDLDRVGGVPRLLKKLYKAGLLRGEALTVEGEPIGKLLERWEPPAVPEAGVLYDVDRPYKPHGGIRILWGNLAPRGAVMKIGAAEVLKFEGKALVFDGEAEAFKAVAAGEVKPGHVVVIRYEGPKGAPGMPEMLKVTAAIVGAGLGESVALVTDGRFSGATRGIMVGHVAPEAAAGGPIALVENGDRIVIDGEAGLLKLDVSDEELERRRRQWTPPPPKYKGGLLAKYAALVSQADQGAVTTPETCQC</sequence>
<keyword id="KW-0001">2Fe-2S</keyword>
<keyword id="KW-0028">Amino-acid biosynthesis</keyword>
<keyword id="KW-0100">Branched-chain amino acid biosynthesis</keyword>
<keyword id="KW-0408">Iron</keyword>
<keyword id="KW-0411">Iron-sulfur</keyword>
<keyword id="KW-0456">Lyase</keyword>
<keyword id="KW-0460">Magnesium</keyword>
<keyword id="KW-0479">Metal-binding</keyword>